<keyword id="KW-0229">DNA integration</keyword>
<keyword id="KW-0233">DNA recombination</keyword>
<keyword id="KW-0238">DNA-binding</keyword>
<keyword id="KW-1185">Reference proteome</keyword>
<keyword id="KW-1179">Viral genome integration</keyword>
<keyword id="KW-1160">Virus entry into host cell</keyword>
<gene>
    <name type="ordered locus">MT2735</name>
</gene>
<protein>
    <recommendedName>
        <fullName>Putative prophage phiRv2 integrase</fullName>
    </recommendedName>
</protein>
<reference key="1">
    <citation type="journal article" date="2002" name="J. Bacteriol.">
        <title>Whole-genome comparison of Mycobacterium tuberculosis clinical and laboratory strains.</title>
        <authorList>
            <person name="Fleischmann R.D."/>
            <person name="Alland D."/>
            <person name="Eisen J.A."/>
            <person name="Carpenter L."/>
            <person name="White O."/>
            <person name="Peterson J.D."/>
            <person name="DeBoy R.T."/>
            <person name="Dodson R.J."/>
            <person name="Gwinn M.L."/>
            <person name="Haft D.H."/>
            <person name="Hickey E.K."/>
            <person name="Kolonay J.F."/>
            <person name="Nelson W.C."/>
            <person name="Umayam L.A."/>
            <person name="Ermolaeva M.D."/>
            <person name="Salzberg S.L."/>
            <person name="Delcher A."/>
            <person name="Utterback T.R."/>
            <person name="Weidman J.F."/>
            <person name="Khouri H.M."/>
            <person name="Gill J."/>
            <person name="Mikula A."/>
            <person name="Bishai W."/>
            <person name="Jacobs W.R. Jr."/>
            <person name="Venter J.C."/>
            <person name="Fraser C.M."/>
        </authorList>
    </citation>
    <scope>NUCLEOTIDE SEQUENCE [LARGE SCALE GENOMIC DNA]</scope>
    <source>
        <strain>CDC 1551 / Oshkosh</strain>
    </source>
</reference>
<comment type="function">
    <text evidence="1">Integrase is necessary for integration of the phage into the host genome by site-specific recombination. In conjunction with excisionase, integrase is also necessary for excision of the prophage from the host genome (By similarity).</text>
</comment>
<comment type="similarity">
    <text evidence="4">Belongs to the 'phage' integrase family.</text>
</comment>
<comment type="sequence caution" evidence="4">
    <conflict type="erroneous initiation">
        <sequence resource="EMBL-CDS" id="AAK47050"/>
    </conflict>
</comment>
<name>INT2_MYCTO</name>
<accession>P9WMB2</accession>
<accession>L0TD68</accession>
<accession>P71956</accession>
<accession>Q7D6T7</accession>
<proteinExistence type="inferred from homology"/>
<evidence type="ECO:0000250" key="1"/>
<evidence type="ECO:0000255" key="2">
    <source>
        <dbReference type="PROSITE-ProRule" id="PRU01246"/>
    </source>
</evidence>
<evidence type="ECO:0000255" key="3">
    <source>
        <dbReference type="PROSITE-ProRule" id="PRU01248"/>
    </source>
</evidence>
<evidence type="ECO:0000305" key="4"/>
<feature type="chain" id="PRO_0000427334" description="Putative prophage phiRv2 integrase">
    <location>
        <begin position="1"/>
        <end position="375"/>
    </location>
</feature>
<feature type="domain" description="Core-binding (CB)" evidence="3">
    <location>
        <begin position="75"/>
        <end position="153"/>
    </location>
</feature>
<feature type="domain" description="Tyr recombinase" evidence="2">
    <location>
        <begin position="175"/>
        <end position="364"/>
    </location>
</feature>
<feature type="active site" evidence="2">
    <location>
        <position position="209"/>
    </location>
</feature>
<feature type="active site" evidence="2">
    <location>
        <position position="316"/>
    </location>
</feature>
<feature type="active site" evidence="2">
    <location>
        <position position="319"/>
    </location>
</feature>
<feature type="active site" evidence="2">
    <location>
        <position position="342"/>
    </location>
</feature>
<feature type="active site" description="O-(3'-phospho-DNA)-tyrosine intermediate" evidence="2">
    <location>
        <position position="351"/>
    </location>
</feature>
<sequence>MTQTGKRQRRKFGRIRQFNSGRWQASYTGPDGRVYIAPKTFNAKIDAEAWLTDRRREIDRQLWSPASGQEDRPGAPFGEYAEGWLKQRGIKDRTRAHYRKLLDNHILATFADTDLRDITPAAVRRWYATTAVGTPTMRAHSYSLLRAIMQTALADDLIDSNPCRISGASTARRVHKIRPATLDELETITKAMPDPYQAFVLMAAWLAMRYGELTELRRKDIDLHGEVARVRRAVVRVGEGFKVTTPKSDAGVRDISIPPHLIPAIEDHLHKHVNPGRESLLFPSVNDPNRHLAPSALYRMFYKARKAAGRPDLRVHDLRHSGAVLAASTGATLAELMQRLGHSTAGAALRYQHAAKGRDREIAALLSKLAENQEM</sequence>
<dbReference type="EMBL" id="AE000516">
    <property type="protein sequence ID" value="AAK47050.1"/>
    <property type="status" value="ALT_INIT"/>
    <property type="molecule type" value="Genomic_DNA"/>
</dbReference>
<dbReference type="PIR" id="G70966">
    <property type="entry name" value="G70966"/>
</dbReference>
<dbReference type="RefSeq" id="WP_003899420.1">
    <property type="nucleotide sequence ID" value="NZ_KK341227.1"/>
</dbReference>
<dbReference type="SMR" id="P9WMB2"/>
<dbReference type="KEGG" id="mtc:MT2735"/>
<dbReference type="PATRIC" id="fig|83331.31.peg.2946"/>
<dbReference type="HOGENOM" id="CLU_027562_17_5_11"/>
<dbReference type="Proteomes" id="UP000001020">
    <property type="component" value="Chromosome"/>
</dbReference>
<dbReference type="GO" id="GO:0003677">
    <property type="term" value="F:DNA binding"/>
    <property type="evidence" value="ECO:0007669"/>
    <property type="project" value="UniProtKB-KW"/>
</dbReference>
<dbReference type="GO" id="GO:0015074">
    <property type="term" value="P:DNA integration"/>
    <property type="evidence" value="ECO:0007669"/>
    <property type="project" value="UniProtKB-KW"/>
</dbReference>
<dbReference type="GO" id="GO:0006310">
    <property type="term" value="P:DNA recombination"/>
    <property type="evidence" value="ECO:0007669"/>
    <property type="project" value="UniProtKB-KW"/>
</dbReference>
<dbReference type="GO" id="GO:0075713">
    <property type="term" value="P:establishment of integrated proviral latency"/>
    <property type="evidence" value="ECO:0007669"/>
    <property type="project" value="UniProtKB-KW"/>
</dbReference>
<dbReference type="GO" id="GO:0046718">
    <property type="term" value="P:symbiont entry into host cell"/>
    <property type="evidence" value="ECO:0007669"/>
    <property type="project" value="UniProtKB-KW"/>
</dbReference>
<dbReference type="GO" id="GO:0044826">
    <property type="term" value="P:viral genome integration into host DNA"/>
    <property type="evidence" value="ECO:0007669"/>
    <property type="project" value="UniProtKB-KW"/>
</dbReference>
<dbReference type="CDD" id="cd01189">
    <property type="entry name" value="INT_ICEBs1_C_like"/>
    <property type="match status" value="1"/>
</dbReference>
<dbReference type="Gene3D" id="1.10.150.130">
    <property type="match status" value="1"/>
</dbReference>
<dbReference type="Gene3D" id="1.10.443.10">
    <property type="entry name" value="Intergrase catalytic core"/>
    <property type="match status" value="1"/>
</dbReference>
<dbReference type="InterPro" id="IPR044068">
    <property type="entry name" value="CB"/>
</dbReference>
<dbReference type="InterPro" id="IPR011010">
    <property type="entry name" value="DNA_brk_join_enz"/>
</dbReference>
<dbReference type="InterPro" id="IPR013762">
    <property type="entry name" value="Integrase-like_cat_sf"/>
</dbReference>
<dbReference type="InterPro" id="IPR002104">
    <property type="entry name" value="Integrase_catalytic"/>
</dbReference>
<dbReference type="InterPro" id="IPR010998">
    <property type="entry name" value="Integrase_recombinase_N"/>
</dbReference>
<dbReference type="InterPro" id="IPR004107">
    <property type="entry name" value="Integrase_SAM-like_N"/>
</dbReference>
<dbReference type="InterPro" id="IPR050090">
    <property type="entry name" value="Tyrosine_recombinase_XerCD"/>
</dbReference>
<dbReference type="PANTHER" id="PTHR30349">
    <property type="entry name" value="PHAGE INTEGRASE-RELATED"/>
    <property type="match status" value="1"/>
</dbReference>
<dbReference type="PANTHER" id="PTHR30349:SF64">
    <property type="entry name" value="PROPHAGE INTEGRASE INTD-RELATED"/>
    <property type="match status" value="1"/>
</dbReference>
<dbReference type="Pfam" id="PF14659">
    <property type="entry name" value="Phage_int_SAM_3"/>
    <property type="match status" value="1"/>
</dbReference>
<dbReference type="Pfam" id="PF00589">
    <property type="entry name" value="Phage_integrase"/>
    <property type="match status" value="1"/>
</dbReference>
<dbReference type="SUPFAM" id="SSF56349">
    <property type="entry name" value="DNA breaking-rejoining enzymes"/>
    <property type="match status" value="1"/>
</dbReference>
<dbReference type="PROSITE" id="PS51900">
    <property type="entry name" value="CB"/>
    <property type="match status" value="1"/>
</dbReference>
<dbReference type="PROSITE" id="PS51898">
    <property type="entry name" value="TYR_RECOMBINASE"/>
    <property type="match status" value="1"/>
</dbReference>
<organism>
    <name type="scientific">Mycobacterium tuberculosis (strain CDC 1551 / Oshkosh)</name>
    <dbReference type="NCBI Taxonomy" id="83331"/>
    <lineage>
        <taxon>Bacteria</taxon>
        <taxon>Bacillati</taxon>
        <taxon>Actinomycetota</taxon>
        <taxon>Actinomycetes</taxon>
        <taxon>Mycobacteriales</taxon>
        <taxon>Mycobacteriaceae</taxon>
        <taxon>Mycobacterium</taxon>
        <taxon>Mycobacterium tuberculosis complex</taxon>
    </lineage>
</organism>